<name>NU2C2_SOLLC</name>
<comment type="function">
    <text evidence="1">NDH shuttles electrons from NAD(P)H:plastoquinone, via FMN and iron-sulfur (Fe-S) centers, to quinones in the photosynthetic chain and possibly in a chloroplast respiratory chain. The immediate electron acceptor for the enzyme in this species is believed to be plastoquinone. Couples the redox reaction to proton translocation, and thus conserves the redox energy in a proton gradient.</text>
</comment>
<comment type="catalytic activity">
    <reaction evidence="1">
        <text>a plastoquinone + NADH + (n+1) H(+)(in) = a plastoquinol + NAD(+) + n H(+)(out)</text>
        <dbReference type="Rhea" id="RHEA:42608"/>
        <dbReference type="Rhea" id="RHEA-COMP:9561"/>
        <dbReference type="Rhea" id="RHEA-COMP:9562"/>
        <dbReference type="ChEBI" id="CHEBI:15378"/>
        <dbReference type="ChEBI" id="CHEBI:17757"/>
        <dbReference type="ChEBI" id="CHEBI:57540"/>
        <dbReference type="ChEBI" id="CHEBI:57945"/>
        <dbReference type="ChEBI" id="CHEBI:62192"/>
    </reaction>
</comment>
<comment type="catalytic activity">
    <reaction evidence="1">
        <text>a plastoquinone + NADPH + (n+1) H(+)(in) = a plastoquinol + NADP(+) + n H(+)(out)</text>
        <dbReference type="Rhea" id="RHEA:42612"/>
        <dbReference type="Rhea" id="RHEA-COMP:9561"/>
        <dbReference type="Rhea" id="RHEA-COMP:9562"/>
        <dbReference type="ChEBI" id="CHEBI:15378"/>
        <dbReference type="ChEBI" id="CHEBI:17757"/>
        <dbReference type="ChEBI" id="CHEBI:57783"/>
        <dbReference type="ChEBI" id="CHEBI:58349"/>
        <dbReference type="ChEBI" id="CHEBI:62192"/>
    </reaction>
</comment>
<comment type="subunit">
    <text evidence="1">NDH is composed of at least 16 different subunits, 5 of which are encoded in the nucleus.</text>
</comment>
<comment type="subcellular location">
    <subcellularLocation>
        <location evidence="1">Plastid</location>
        <location evidence="1">Chloroplast thylakoid membrane</location>
        <topology evidence="1">Multi-pass membrane protein</topology>
    </subcellularLocation>
</comment>
<comment type="similarity">
    <text evidence="1">Belongs to the complex I subunit 2 family.</text>
</comment>
<evidence type="ECO:0000255" key="1">
    <source>
        <dbReference type="HAMAP-Rule" id="MF_00445"/>
    </source>
</evidence>
<geneLocation type="chloroplast"/>
<feature type="chain" id="PRO_0000391311" description="NAD(P)H-quinone oxidoreductase subunit 2 B, chloroplastic">
    <location>
        <begin position="1"/>
        <end position="510"/>
    </location>
</feature>
<feature type="transmembrane region" description="Helical" evidence="1">
    <location>
        <begin position="24"/>
        <end position="44"/>
    </location>
</feature>
<feature type="transmembrane region" description="Helical" evidence="1">
    <location>
        <begin position="57"/>
        <end position="77"/>
    </location>
</feature>
<feature type="transmembrane region" description="Helical" evidence="1">
    <location>
        <begin position="99"/>
        <end position="119"/>
    </location>
</feature>
<feature type="transmembrane region" description="Helical" evidence="1">
    <location>
        <begin position="124"/>
        <end position="144"/>
    </location>
</feature>
<feature type="transmembrane region" description="Helical" evidence="1">
    <location>
        <begin position="149"/>
        <end position="169"/>
    </location>
</feature>
<feature type="transmembrane region" description="Helical" evidence="1">
    <location>
        <begin position="183"/>
        <end position="203"/>
    </location>
</feature>
<feature type="transmembrane region" description="Helical" evidence="1">
    <location>
        <begin position="227"/>
        <end position="247"/>
    </location>
</feature>
<feature type="transmembrane region" description="Helical" evidence="1">
    <location>
        <begin position="295"/>
        <end position="315"/>
    </location>
</feature>
<feature type="transmembrane region" description="Helical" evidence="1">
    <location>
        <begin position="323"/>
        <end position="343"/>
    </location>
</feature>
<feature type="transmembrane region" description="Helical" evidence="1">
    <location>
        <begin position="354"/>
        <end position="374"/>
    </location>
</feature>
<feature type="transmembrane region" description="Helical" evidence="1">
    <location>
        <begin position="395"/>
        <end position="415"/>
    </location>
</feature>
<feature type="transmembrane region" description="Helical" evidence="1">
    <location>
        <begin position="418"/>
        <end position="438"/>
    </location>
</feature>
<feature type="transmembrane region" description="Helical" evidence="1">
    <location>
        <begin position="484"/>
        <end position="504"/>
    </location>
</feature>
<dbReference type="EC" id="7.1.1.-" evidence="1"/>
<dbReference type="EMBL" id="DQ347959">
    <property type="protein sequence ID" value="ABC56362.1"/>
    <property type="molecule type" value="Genomic_DNA"/>
</dbReference>
<dbReference type="EMBL" id="AM087200">
    <property type="protein sequence ID" value="CAJ32455.1"/>
    <property type="molecule type" value="Genomic_DNA"/>
</dbReference>
<dbReference type="RefSeq" id="AP_004973.1">
    <property type="nucleotide sequence ID" value="AC_000188.1"/>
</dbReference>
<dbReference type="RefSeq" id="AP_004989.1">
    <property type="nucleotide sequence ID" value="AC_000188.1"/>
</dbReference>
<dbReference type="SMR" id="P0CD47"/>
<dbReference type="FunCoup" id="P0CD47">
    <property type="interactions" value="24"/>
</dbReference>
<dbReference type="STRING" id="4081.P0CD47"/>
<dbReference type="KEGG" id="sly:3950395"/>
<dbReference type="KEGG" id="sly:3950469"/>
<dbReference type="InParanoid" id="P0CD47"/>
<dbReference type="OrthoDB" id="1712451at2759"/>
<dbReference type="Proteomes" id="UP000004994">
    <property type="component" value="Chloroplast"/>
</dbReference>
<dbReference type="ExpressionAtlas" id="P0CD47">
    <property type="expression patterns" value="baseline"/>
</dbReference>
<dbReference type="GO" id="GO:0009535">
    <property type="term" value="C:chloroplast thylakoid membrane"/>
    <property type="evidence" value="ECO:0007669"/>
    <property type="project" value="UniProtKB-SubCell"/>
</dbReference>
<dbReference type="GO" id="GO:0008137">
    <property type="term" value="F:NADH dehydrogenase (ubiquinone) activity"/>
    <property type="evidence" value="ECO:0007669"/>
    <property type="project" value="InterPro"/>
</dbReference>
<dbReference type="GO" id="GO:0048038">
    <property type="term" value="F:quinone binding"/>
    <property type="evidence" value="ECO:0007669"/>
    <property type="project" value="UniProtKB-KW"/>
</dbReference>
<dbReference type="GO" id="GO:0042773">
    <property type="term" value="P:ATP synthesis coupled electron transport"/>
    <property type="evidence" value="ECO:0007669"/>
    <property type="project" value="InterPro"/>
</dbReference>
<dbReference type="GO" id="GO:0019684">
    <property type="term" value="P:photosynthesis, light reaction"/>
    <property type="evidence" value="ECO:0007669"/>
    <property type="project" value="UniProtKB-UniRule"/>
</dbReference>
<dbReference type="HAMAP" id="MF_00445">
    <property type="entry name" value="NDH1_NuoN_1"/>
    <property type="match status" value="1"/>
</dbReference>
<dbReference type="InterPro" id="IPR010096">
    <property type="entry name" value="NADH-Q_OxRdtase_suN/2"/>
</dbReference>
<dbReference type="InterPro" id="IPR001750">
    <property type="entry name" value="ND/Mrp_TM"/>
</dbReference>
<dbReference type="InterPro" id="IPR045693">
    <property type="entry name" value="Ndh2_N"/>
</dbReference>
<dbReference type="NCBIfam" id="TIGR01770">
    <property type="entry name" value="NDH_I_N"/>
    <property type="match status" value="1"/>
</dbReference>
<dbReference type="NCBIfam" id="NF002701">
    <property type="entry name" value="PRK02504.1"/>
    <property type="match status" value="1"/>
</dbReference>
<dbReference type="PANTHER" id="PTHR22773">
    <property type="entry name" value="NADH DEHYDROGENASE"/>
    <property type="match status" value="1"/>
</dbReference>
<dbReference type="Pfam" id="PF19530">
    <property type="entry name" value="Ndh2_N"/>
    <property type="match status" value="1"/>
</dbReference>
<dbReference type="Pfam" id="PF00361">
    <property type="entry name" value="Proton_antipo_M"/>
    <property type="match status" value="1"/>
</dbReference>
<dbReference type="PRINTS" id="PR01434">
    <property type="entry name" value="NADHDHGNASE5"/>
</dbReference>
<protein>
    <recommendedName>
        <fullName evidence="1">NAD(P)H-quinone oxidoreductase subunit 2 B, chloroplastic</fullName>
        <ecNumber evidence="1">7.1.1.-</ecNumber>
    </recommendedName>
    <alternativeName>
        <fullName evidence="1">NAD(P)H dehydrogenase, subunit 2 B</fullName>
    </alternativeName>
    <alternativeName>
        <fullName evidence="1">NADH-plastoquinone oxidoreductase subunit 2 B</fullName>
    </alternativeName>
</protein>
<proteinExistence type="inferred from homology"/>
<gene>
    <name evidence="1" type="primary">ndhB2</name>
</gene>
<sequence length="510" mass="56644">MIWHVQNENFILDSTRIFMKAFHLLLFDGSLIFPECILIFGLILLLMIDSTSDQKDIPWLYFISSTSLVMSITALLFRWREEPMISFSGNFQTNNFNEIFQFLILLCSTLCIPLSVEYIECTEMAITEFLLFVLTATLGGMFLCGANDLITIFVAPECFSLCSYLLSGYTKKDVRSNEATMKYLLMGGASSSILVHGFSWLYGSSGGEIELQEIVNGLINTQMYNSPGISIALIFITVGIGFKLSPAPSHQWTPDVYEGSPTPVVAFLSVTSKVAASASATRIFNIPFYFSSNEWHLLLEILAILSMILGNLIAITQTSMKRMLAYSSIGQIGYVIIGIIVGDSNDGYASMITYMLFYISMNLGTFACIVLFGLRTGTDNIRDYAGLYTKDPFLALSLALCLLSLGGLPPLAGFFGKLYLFWCGWQAGLYFLVLIGLLTSVVSIYYYLKIIKLLMTGRNQEITPHVRNYRRSPLRSNNSIELSMIVCVIASTIPGISMNPIIAIAQDSLF</sequence>
<accession>P0CD47</accession>
<accession>Q2MI40</accession>
<organism>
    <name type="scientific">Solanum lycopersicum</name>
    <name type="common">Tomato</name>
    <name type="synonym">Lycopersicon esculentum</name>
    <dbReference type="NCBI Taxonomy" id="4081"/>
    <lineage>
        <taxon>Eukaryota</taxon>
        <taxon>Viridiplantae</taxon>
        <taxon>Streptophyta</taxon>
        <taxon>Embryophyta</taxon>
        <taxon>Tracheophyta</taxon>
        <taxon>Spermatophyta</taxon>
        <taxon>Magnoliopsida</taxon>
        <taxon>eudicotyledons</taxon>
        <taxon>Gunneridae</taxon>
        <taxon>Pentapetalae</taxon>
        <taxon>asterids</taxon>
        <taxon>lamiids</taxon>
        <taxon>Solanales</taxon>
        <taxon>Solanaceae</taxon>
        <taxon>Solanoideae</taxon>
        <taxon>Solaneae</taxon>
        <taxon>Solanum</taxon>
        <taxon>Solanum subgen. Lycopersicon</taxon>
    </lineage>
</organism>
<keyword id="KW-0150">Chloroplast</keyword>
<keyword id="KW-0472">Membrane</keyword>
<keyword id="KW-0520">NAD</keyword>
<keyword id="KW-0521">NADP</keyword>
<keyword id="KW-0934">Plastid</keyword>
<keyword id="KW-0618">Plastoquinone</keyword>
<keyword id="KW-0874">Quinone</keyword>
<keyword id="KW-1185">Reference proteome</keyword>
<keyword id="KW-0793">Thylakoid</keyword>
<keyword id="KW-1278">Translocase</keyword>
<keyword id="KW-0812">Transmembrane</keyword>
<keyword id="KW-1133">Transmembrane helix</keyword>
<keyword id="KW-0813">Transport</keyword>
<reference key="1">
    <citation type="journal article" date="2006" name="Theor. Appl. Genet.">
        <title>Complete chloroplast genome sequences of Solanum bulbocastanum, Solanum lycopersicum and comparative analyses with other Solanaceae genomes.</title>
        <authorList>
            <person name="Daniell H."/>
            <person name="Lee S.-B."/>
            <person name="Grevich J."/>
            <person name="Saski C."/>
            <person name="Quesada-Vargas T."/>
            <person name="Guda C."/>
            <person name="Tomkins J."/>
            <person name="Jansen R.K."/>
        </authorList>
    </citation>
    <scope>NUCLEOTIDE SEQUENCE [LARGE SCALE GENOMIC DNA]</scope>
    <source>
        <strain>cv. LA3023</strain>
    </source>
</reference>
<reference key="2">
    <citation type="journal article" date="2006" name="J. Mol. Evol.">
        <title>Sequence of the tomato chloroplast DNA and evolutionary comparison of solanaceous plastid genomes.</title>
        <authorList>
            <person name="Kahlau S."/>
            <person name="Aspinall S."/>
            <person name="Gray J.C."/>
            <person name="Bock R."/>
        </authorList>
    </citation>
    <scope>NUCLEOTIDE SEQUENCE [LARGE SCALE GENOMIC DNA]</scope>
    <source>
        <strain>cv. IPA-6</strain>
    </source>
</reference>